<accession>P47004</accession>
<sequence length="100" mass="11878">MQRFTALHYTPFPLLVFLSSYFPLKMHLFTRVFFLIASITLLYRPTQRGIYIDYKRIVDFDGDLISVQNIQDVYTQCLQLSLYSYHAISRLFSEEKSSVH</sequence>
<protein>
    <recommendedName>
        <fullName>Putative uncharacterized protein YJL150W</fullName>
    </recommendedName>
</protein>
<reference key="1">
    <citation type="journal article" date="1996" name="Yeast">
        <title>Sequence analysis of a 40.7 kb segment from the left arm of yeast chromosome X reveals 14 known genes and 13 new open reading frames including homologues of genes clustered on the right arm of chromosome XI.</title>
        <authorList>
            <person name="Katsoulou C."/>
            <person name="Tzermia M."/>
            <person name="Tavernarakis N."/>
            <person name="Alexandraki D."/>
        </authorList>
    </citation>
    <scope>NUCLEOTIDE SEQUENCE [GENOMIC DNA]</scope>
    <source>
        <strain>ATCC 96604 / S288c / FY1679</strain>
    </source>
</reference>
<reference key="2">
    <citation type="journal article" date="1996" name="EMBO J.">
        <title>Complete nucleotide sequence of Saccharomyces cerevisiae chromosome X.</title>
        <authorList>
            <person name="Galibert F."/>
            <person name="Alexandraki D."/>
            <person name="Baur A."/>
            <person name="Boles E."/>
            <person name="Chalwatzis N."/>
            <person name="Chuat J.-C."/>
            <person name="Coster F."/>
            <person name="Cziepluch C."/>
            <person name="de Haan M."/>
            <person name="Domdey H."/>
            <person name="Durand P."/>
            <person name="Entian K.-D."/>
            <person name="Gatius M."/>
            <person name="Goffeau A."/>
            <person name="Grivell L.A."/>
            <person name="Hennemann A."/>
            <person name="Herbert C.J."/>
            <person name="Heumann K."/>
            <person name="Hilger F."/>
            <person name="Hollenberg C.P."/>
            <person name="Huang M.-E."/>
            <person name="Jacq C."/>
            <person name="Jauniaux J.-C."/>
            <person name="Katsoulou C."/>
            <person name="Kirchrath L."/>
            <person name="Kleine K."/>
            <person name="Kordes E."/>
            <person name="Koetter P."/>
            <person name="Liebl S."/>
            <person name="Louis E.J."/>
            <person name="Manus V."/>
            <person name="Mewes H.-W."/>
            <person name="Miosga T."/>
            <person name="Obermaier B."/>
            <person name="Perea J."/>
            <person name="Pohl T.M."/>
            <person name="Portetelle D."/>
            <person name="Pujol A."/>
            <person name="Purnelle B."/>
            <person name="Ramezani Rad M."/>
            <person name="Rasmussen S.W."/>
            <person name="Rose M."/>
            <person name="Rossau R."/>
            <person name="Schaaff-Gerstenschlaeger I."/>
            <person name="Smits P.H.M."/>
            <person name="Scarcez T."/>
            <person name="Soriano N."/>
            <person name="To Van D."/>
            <person name="Tzermia M."/>
            <person name="Van Broekhoven A."/>
            <person name="Vandenbol M."/>
            <person name="Wedler H."/>
            <person name="von Wettstein D."/>
            <person name="Wambutt R."/>
            <person name="Zagulski M."/>
            <person name="Zollner A."/>
            <person name="Karpfinger-Hartl L."/>
        </authorList>
    </citation>
    <scope>NUCLEOTIDE SEQUENCE [LARGE SCALE GENOMIC DNA]</scope>
    <source>
        <strain>ATCC 204508 / S288c</strain>
    </source>
</reference>
<reference key="3">
    <citation type="journal article" date="2014" name="G3 (Bethesda)">
        <title>The reference genome sequence of Saccharomyces cerevisiae: Then and now.</title>
        <authorList>
            <person name="Engel S.R."/>
            <person name="Dietrich F.S."/>
            <person name="Fisk D.G."/>
            <person name="Binkley G."/>
            <person name="Balakrishnan R."/>
            <person name="Costanzo M.C."/>
            <person name="Dwight S.S."/>
            <person name="Hitz B.C."/>
            <person name="Karra K."/>
            <person name="Nash R.S."/>
            <person name="Weng S."/>
            <person name="Wong E.D."/>
            <person name="Lloyd P."/>
            <person name="Skrzypek M.S."/>
            <person name="Miyasato S.R."/>
            <person name="Simison M."/>
            <person name="Cherry J.M."/>
        </authorList>
    </citation>
    <scope>GENOME REANNOTATION</scope>
    <source>
        <strain>ATCC 204508 / S288c</strain>
    </source>
</reference>
<organism>
    <name type="scientific">Saccharomyces cerevisiae (strain ATCC 204508 / S288c)</name>
    <name type="common">Baker's yeast</name>
    <dbReference type="NCBI Taxonomy" id="559292"/>
    <lineage>
        <taxon>Eukaryota</taxon>
        <taxon>Fungi</taxon>
        <taxon>Dikarya</taxon>
        <taxon>Ascomycota</taxon>
        <taxon>Saccharomycotina</taxon>
        <taxon>Saccharomycetes</taxon>
        <taxon>Saccharomycetales</taxon>
        <taxon>Saccharomycetaceae</taxon>
        <taxon>Saccharomyces</taxon>
    </lineage>
</organism>
<proteinExistence type="uncertain"/>
<feature type="chain" id="PRO_0000203030" description="Putative uncharacterized protein YJL150W">
    <location>
        <begin position="1"/>
        <end position="100"/>
    </location>
</feature>
<evidence type="ECO:0000305" key="1">
    <source>
    </source>
</evidence>
<gene>
    <name type="ordered locus">YJL150W</name>
    <name type="ORF">J0632</name>
</gene>
<dbReference type="EMBL" id="Z49425">
    <property type="protein sequence ID" value="CAA89444.1"/>
    <property type="molecule type" value="Genomic_DNA"/>
</dbReference>
<dbReference type="EMBL" id="X87371">
    <property type="protein sequence ID" value="CAA60805.1"/>
    <property type="molecule type" value="Genomic_DNA"/>
</dbReference>
<dbReference type="PIR" id="S55163">
    <property type="entry name" value="S55163"/>
</dbReference>
<dbReference type="SMR" id="P47004"/>
<dbReference type="PaxDb" id="4932-YJL150W"/>
<dbReference type="EnsemblFungi" id="YJL150W_mRNA">
    <property type="protein sequence ID" value="YJL150W"/>
    <property type="gene ID" value="YJL150W"/>
</dbReference>
<dbReference type="AGR" id="SGD:S000003686"/>
<dbReference type="SGD" id="S000003686">
    <property type="gene designation" value="YJL150W"/>
</dbReference>
<dbReference type="HOGENOM" id="CLU_2308249_0_0_1"/>
<name>YJP0_YEAST</name>
<comment type="caution">
    <text evidence="1">Product of a dubious gene prediction unlikely to encode a functional protein. Because of that it is not part of the S.cerevisiae S288c complete/reference proteome set.</text>
</comment>